<sequence length="280" mass="31104">YLLLLCLPLTLMGTGAVPPGPSIEIHPRIVGGWECDKHSQPWQALLTFTNGLDGVCGGVLVHPQWVLTAAHCIGDNYKIKLGLHDRFSKDDPFQEFQVSASFPHPSYNMRLLKLLLSDEMNDTYYYEIFPGADFSHDLMMMQLEKPVQLNDAVQVLDLPTQEPQVGSKCHASGWGSMDPYSRNFPRTGKLQCVDLTLMSNNECSRSHIFKITDDMLCAGHIKGRKDTCGGDSGGPLICDGVFQGTTSWGSYPCGKPRMPGVYVKIFSHVDWIREIIATHS</sequence>
<dbReference type="EC" id="3.4.21.-"/>
<dbReference type="EMBL" id="AB105056">
    <property type="protein sequence ID" value="BAD89852.1"/>
    <property type="molecule type" value="mRNA"/>
</dbReference>
<dbReference type="SMR" id="Q5FBW1"/>
<dbReference type="MEROPS" id="S01.452"/>
<dbReference type="GlyCosmos" id="Q5FBW1">
    <property type="glycosylation" value="2 sites, No reported glycans"/>
</dbReference>
<dbReference type="GO" id="GO:0005576">
    <property type="term" value="C:extracellular region"/>
    <property type="evidence" value="ECO:0007669"/>
    <property type="project" value="UniProtKB-SubCell"/>
</dbReference>
<dbReference type="GO" id="GO:0030141">
    <property type="term" value="C:secretory granule"/>
    <property type="evidence" value="ECO:0007669"/>
    <property type="project" value="TreeGrafter"/>
</dbReference>
<dbReference type="GO" id="GO:0004252">
    <property type="term" value="F:serine-type endopeptidase activity"/>
    <property type="evidence" value="ECO:0007669"/>
    <property type="project" value="InterPro"/>
</dbReference>
<dbReference type="GO" id="GO:0003073">
    <property type="term" value="P:regulation of systemic arterial blood pressure"/>
    <property type="evidence" value="ECO:0007669"/>
    <property type="project" value="TreeGrafter"/>
</dbReference>
<dbReference type="GO" id="GO:0031638">
    <property type="term" value="P:zymogen activation"/>
    <property type="evidence" value="ECO:0007669"/>
    <property type="project" value="TreeGrafter"/>
</dbReference>
<dbReference type="CDD" id="cd00190">
    <property type="entry name" value="Tryp_SPc"/>
    <property type="match status" value="1"/>
</dbReference>
<dbReference type="FunFam" id="2.40.10.10:FF:000010">
    <property type="entry name" value="Kallikrein related peptidase 11"/>
    <property type="match status" value="1"/>
</dbReference>
<dbReference type="Gene3D" id="2.40.10.10">
    <property type="entry name" value="Trypsin-like serine proteases"/>
    <property type="match status" value="2"/>
</dbReference>
<dbReference type="InterPro" id="IPR009003">
    <property type="entry name" value="Peptidase_S1_PA"/>
</dbReference>
<dbReference type="InterPro" id="IPR043504">
    <property type="entry name" value="Peptidase_S1_PA_chymotrypsin"/>
</dbReference>
<dbReference type="InterPro" id="IPR001314">
    <property type="entry name" value="Peptidase_S1A"/>
</dbReference>
<dbReference type="InterPro" id="IPR001254">
    <property type="entry name" value="Trypsin_dom"/>
</dbReference>
<dbReference type="InterPro" id="IPR018114">
    <property type="entry name" value="TRYPSIN_HIS"/>
</dbReference>
<dbReference type="InterPro" id="IPR033116">
    <property type="entry name" value="TRYPSIN_SER"/>
</dbReference>
<dbReference type="PANTHER" id="PTHR24271:SF47">
    <property type="entry name" value="KALLIKREIN-1"/>
    <property type="match status" value="1"/>
</dbReference>
<dbReference type="PANTHER" id="PTHR24271">
    <property type="entry name" value="KALLIKREIN-RELATED"/>
    <property type="match status" value="1"/>
</dbReference>
<dbReference type="Pfam" id="PF00089">
    <property type="entry name" value="Trypsin"/>
    <property type="match status" value="1"/>
</dbReference>
<dbReference type="PRINTS" id="PR00722">
    <property type="entry name" value="CHYMOTRYPSIN"/>
</dbReference>
<dbReference type="SMART" id="SM00020">
    <property type="entry name" value="Tryp_SPc"/>
    <property type="match status" value="1"/>
</dbReference>
<dbReference type="SUPFAM" id="SSF50494">
    <property type="entry name" value="Trypsin-like serine proteases"/>
    <property type="match status" value="1"/>
</dbReference>
<dbReference type="PROSITE" id="PS50240">
    <property type="entry name" value="TRYPSIN_DOM"/>
    <property type="match status" value="1"/>
</dbReference>
<dbReference type="PROSITE" id="PS00134">
    <property type="entry name" value="TRYPSIN_HIS"/>
    <property type="match status" value="1"/>
</dbReference>
<dbReference type="PROSITE" id="PS00135">
    <property type="entry name" value="TRYPSIN_SER"/>
    <property type="match status" value="1"/>
</dbReference>
<name>KLK2_BLABR</name>
<accession>Q5FBW1</accession>
<protein>
    <recommendedName>
        <fullName>Blarinasin-2</fullName>
        <ecNumber>3.4.21.-</ecNumber>
    </recommendedName>
    <alternativeName>
        <fullName>Kallikrein-2</fullName>
    </alternativeName>
</protein>
<gene>
    <name type="primary">KLK2</name>
</gene>
<reference key="1">
    <citation type="submission" date="2003-03" db="EMBL/GenBank/DDBJ databases">
        <title>Blarina brevicauda kallikrein mRNA.</title>
        <authorList>
            <person name="Kita M."/>
            <person name="Nakamura Y."/>
            <person name="Kido H."/>
            <person name="Uemura D."/>
        </authorList>
    </citation>
    <scope>NUCLEOTIDE SEQUENCE [MRNA]</scope>
    <source>
        <tissue>Salivary gland</tissue>
    </source>
</reference>
<keyword id="KW-1015">Disulfide bond</keyword>
<keyword id="KW-0325">Glycoprotein</keyword>
<keyword id="KW-0378">Hydrolase</keyword>
<keyword id="KW-0645">Protease</keyword>
<keyword id="KW-0964">Secreted</keyword>
<keyword id="KW-0720">Serine protease</keyword>
<keyword id="KW-0732">Signal</keyword>
<keyword id="KW-0865">Zymogen</keyword>
<comment type="function">
    <text evidence="1">A kallikrein-like protease. It preferentially converts human high-molecular-weight kininogen (HK) to bradykinin. Is not toxic to mice (By similarity).</text>
</comment>
<comment type="subcellular location">
    <subcellularLocation>
        <location evidence="1">Secreted</location>
    </subcellularLocation>
</comment>
<comment type="tissue specificity">
    <text>Salivary glands.</text>
</comment>
<comment type="similarity">
    <text evidence="3">Belongs to the peptidase S1 family. Kallikrein subfamily.</text>
</comment>
<feature type="signal peptide" evidence="2">
    <location>
        <begin position="1" status="less than"/>
        <end position="16"/>
    </location>
</feature>
<feature type="propeptide" id="PRO_0000288942">
    <location>
        <begin position="17"/>
        <end position="28"/>
    </location>
</feature>
<feature type="chain" id="PRO_0000288943" description="Blarinasin-2">
    <location>
        <begin position="29"/>
        <end position="280"/>
    </location>
</feature>
<feature type="domain" description="Peptidase S1" evidence="3">
    <location>
        <begin position="29"/>
        <end position="277"/>
    </location>
</feature>
<feature type="active site" description="Charge relay system" evidence="1">
    <location>
        <position position="71"/>
    </location>
</feature>
<feature type="active site" description="Charge relay system" evidence="1">
    <location>
        <position position="137"/>
    </location>
</feature>
<feature type="active site" description="Charge relay system" evidence="1">
    <location>
        <position position="232"/>
    </location>
</feature>
<feature type="glycosylation site" description="O-linked (GalNAc...) serine" evidence="1">
    <location>
        <position position="99"/>
    </location>
</feature>
<feature type="glycosylation site" description="N-linked (GlcNAc...) asparagine" evidence="2">
    <location>
        <position position="121"/>
    </location>
</feature>
<feature type="disulfide bond" evidence="3">
    <location>
        <begin position="35"/>
        <end position="192"/>
    </location>
</feature>
<feature type="disulfide bond" evidence="3">
    <location>
        <begin position="56"/>
        <end position="72"/>
    </location>
</feature>
<feature type="disulfide bond" evidence="3">
    <location>
        <begin position="169"/>
        <end position="238"/>
    </location>
</feature>
<feature type="disulfide bond" evidence="3">
    <location>
        <begin position="203"/>
        <end position="217"/>
    </location>
</feature>
<feature type="disulfide bond" evidence="3">
    <location>
        <begin position="228"/>
        <end position="253"/>
    </location>
</feature>
<feature type="non-terminal residue">
    <location>
        <position position="1"/>
    </location>
</feature>
<organism>
    <name type="scientific">Blarina brevicauda</name>
    <name type="common">Northern short-tailed shrew</name>
    <dbReference type="NCBI Taxonomy" id="9387"/>
    <lineage>
        <taxon>Eukaryota</taxon>
        <taxon>Metazoa</taxon>
        <taxon>Chordata</taxon>
        <taxon>Craniata</taxon>
        <taxon>Vertebrata</taxon>
        <taxon>Euteleostomi</taxon>
        <taxon>Mammalia</taxon>
        <taxon>Eutheria</taxon>
        <taxon>Laurasiatheria</taxon>
        <taxon>Eulipotyphla</taxon>
        <taxon>Soricidae</taxon>
        <taxon>Soricinae</taxon>
        <taxon>Blarina</taxon>
    </lineage>
</organism>
<proteinExistence type="evidence at transcript level"/>
<evidence type="ECO:0000250" key="1"/>
<evidence type="ECO:0000255" key="2"/>
<evidence type="ECO:0000255" key="3">
    <source>
        <dbReference type="PROSITE-ProRule" id="PRU00274"/>
    </source>
</evidence>